<sequence length="619" mass="67838">MALLQIAEPGQSSAPHQHRIAIGIDLGTTHSLVATVLSGKPKVLNDVQNRRLLPSIVHYGDNTTHYGEEAKPFIIADPKNTIVSVKRFMGRSKADIKFQHPYELVGSENEMPAFETRAGRKTPVEISAEILKQLKDRAEDSLQNPVNGAVITVPAYFDEAQRQATRDAAQLAGLNVLRLLNEPTAAAVAYGLDQESNLATDRNYVIYDLGGGTFDVSILRFSQGVFEVLATGGHTALGGDDLDRLIVKWAKKQLNIDVLSDEDYAVFIVAARQAKEQLSTQDSVELKLLEATLTLDRPTFESIIQVALDKTISVCKRVLRDAKLELTDIQNVVLVGGSTRSYAVQKAVREVFAQEPLCTINPDEVVAIGASITANQLIGNSQDGSLLLDVTPLSLGLETMGGLVERLISRNTAIPVARRQEFTTYQDGQTAMLIHVVQGERDLVEHCRSLGRFVLHGIPPMTAGQARIEVTFQVDADGLLTVSAREATSGVQAHIDIKPSYGLSEADTERLLIEGFQHAEEDKNLRHLKETKVEAERELESLEQALKVDADLLDEKQLDALNSAKESLKAQLEGSDIQAIEHAVQQLKVHSDAFAALRMNRHIDHALKGTKLDDWSKSN</sequence>
<feature type="chain" id="PRO_1000131655" description="Chaperone protein HscA homolog">
    <location>
        <begin position="1"/>
        <end position="619"/>
    </location>
</feature>
<proteinExistence type="inferred from homology"/>
<organism>
    <name type="scientific">Acinetobacter baumannii (strain AB0057)</name>
    <dbReference type="NCBI Taxonomy" id="480119"/>
    <lineage>
        <taxon>Bacteria</taxon>
        <taxon>Pseudomonadati</taxon>
        <taxon>Pseudomonadota</taxon>
        <taxon>Gammaproteobacteria</taxon>
        <taxon>Moraxellales</taxon>
        <taxon>Moraxellaceae</taxon>
        <taxon>Acinetobacter</taxon>
        <taxon>Acinetobacter calcoaceticus/baumannii complex</taxon>
    </lineage>
</organism>
<reference key="1">
    <citation type="journal article" date="2008" name="J. Bacteriol.">
        <title>Comparative genome sequence analysis of multidrug-resistant Acinetobacter baumannii.</title>
        <authorList>
            <person name="Adams M.D."/>
            <person name="Goglin K."/>
            <person name="Molyneaux N."/>
            <person name="Hujer K.M."/>
            <person name="Lavender H."/>
            <person name="Jamison J.J."/>
            <person name="MacDonald I.J."/>
            <person name="Martin K.M."/>
            <person name="Russo T."/>
            <person name="Campagnari A.A."/>
            <person name="Hujer A.M."/>
            <person name="Bonomo R.A."/>
            <person name="Gill S.R."/>
        </authorList>
    </citation>
    <scope>NUCLEOTIDE SEQUENCE [LARGE SCALE GENOMIC DNA]</scope>
    <source>
        <strain>AB0057</strain>
    </source>
</reference>
<dbReference type="EMBL" id="CP001182">
    <property type="protein sequence ID" value="ACJ41231.1"/>
    <property type="molecule type" value="Genomic_DNA"/>
</dbReference>
<dbReference type="RefSeq" id="WP_001196578.1">
    <property type="nucleotide sequence ID" value="NC_011586.2"/>
</dbReference>
<dbReference type="SMR" id="B7I5P9"/>
<dbReference type="KEGG" id="abn:AB57_1852"/>
<dbReference type="HOGENOM" id="CLU_005965_2_3_6"/>
<dbReference type="Proteomes" id="UP000007094">
    <property type="component" value="Chromosome"/>
</dbReference>
<dbReference type="GO" id="GO:0005524">
    <property type="term" value="F:ATP binding"/>
    <property type="evidence" value="ECO:0007669"/>
    <property type="project" value="UniProtKB-KW"/>
</dbReference>
<dbReference type="GO" id="GO:0016887">
    <property type="term" value="F:ATP hydrolysis activity"/>
    <property type="evidence" value="ECO:0007669"/>
    <property type="project" value="UniProtKB-UniRule"/>
</dbReference>
<dbReference type="GO" id="GO:0140662">
    <property type="term" value="F:ATP-dependent protein folding chaperone"/>
    <property type="evidence" value="ECO:0007669"/>
    <property type="project" value="InterPro"/>
</dbReference>
<dbReference type="GO" id="GO:0051082">
    <property type="term" value="F:unfolded protein binding"/>
    <property type="evidence" value="ECO:0007669"/>
    <property type="project" value="InterPro"/>
</dbReference>
<dbReference type="GO" id="GO:0016226">
    <property type="term" value="P:iron-sulfur cluster assembly"/>
    <property type="evidence" value="ECO:0007669"/>
    <property type="project" value="InterPro"/>
</dbReference>
<dbReference type="CDD" id="cd10236">
    <property type="entry name" value="ASKHA_NBD_HSP70_HscA"/>
    <property type="match status" value="1"/>
</dbReference>
<dbReference type="FunFam" id="3.30.420.40:FF:000046">
    <property type="entry name" value="Chaperone protein HscA"/>
    <property type="match status" value="1"/>
</dbReference>
<dbReference type="Gene3D" id="1.20.1270.10">
    <property type="match status" value="1"/>
</dbReference>
<dbReference type="Gene3D" id="3.30.420.40">
    <property type="match status" value="2"/>
</dbReference>
<dbReference type="Gene3D" id="3.90.640.10">
    <property type="entry name" value="Actin, Chain A, domain 4"/>
    <property type="match status" value="1"/>
</dbReference>
<dbReference type="Gene3D" id="2.60.34.10">
    <property type="entry name" value="Substrate Binding Domain Of DNAk, Chain A, domain 1"/>
    <property type="match status" value="1"/>
</dbReference>
<dbReference type="HAMAP" id="MF_00679">
    <property type="entry name" value="HscA"/>
    <property type="match status" value="1"/>
</dbReference>
<dbReference type="InterPro" id="IPR043129">
    <property type="entry name" value="ATPase_NBD"/>
</dbReference>
<dbReference type="InterPro" id="IPR018181">
    <property type="entry name" value="Heat_shock_70_CS"/>
</dbReference>
<dbReference type="InterPro" id="IPR042039">
    <property type="entry name" value="HscA_NBD"/>
</dbReference>
<dbReference type="InterPro" id="IPR029048">
    <property type="entry name" value="HSP70_C_sf"/>
</dbReference>
<dbReference type="InterPro" id="IPR029047">
    <property type="entry name" value="HSP70_peptide-bd_sf"/>
</dbReference>
<dbReference type="InterPro" id="IPR013126">
    <property type="entry name" value="Hsp_70_fam"/>
</dbReference>
<dbReference type="InterPro" id="IPR010236">
    <property type="entry name" value="ISC_FeS_clus_asmbl_HscA"/>
</dbReference>
<dbReference type="NCBIfam" id="TIGR01991">
    <property type="entry name" value="HscA"/>
    <property type="match status" value="1"/>
</dbReference>
<dbReference type="NCBIfam" id="NF003520">
    <property type="entry name" value="PRK05183.1"/>
    <property type="match status" value="1"/>
</dbReference>
<dbReference type="PANTHER" id="PTHR19375">
    <property type="entry name" value="HEAT SHOCK PROTEIN 70KDA"/>
    <property type="match status" value="1"/>
</dbReference>
<dbReference type="Pfam" id="PF00012">
    <property type="entry name" value="HSP70"/>
    <property type="match status" value="1"/>
</dbReference>
<dbReference type="PRINTS" id="PR00301">
    <property type="entry name" value="HEATSHOCK70"/>
</dbReference>
<dbReference type="SUPFAM" id="SSF53067">
    <property type="entry name" value="Actin-like ATPase domain"/>
    <property type="match status" value="2"/>
</dbReference>
<dbReference type="SUPFAM" id="SSF100934">
    <property type="entry name" value="Heat shock protein 70kD (HSP70), C-terminal subdomain"/>
    <property type="match status" value="1"/>
</dbReference>
<dbReference type="SUPFAM" id="SSF100920">
    <property type="entry name" value="Heat shock protein 70kD (HSP70), peptide-binding domain"/>
    <property type="match status" value="1"/>
</dbReference>
<dbReference type="PROSITE" id="PS00297">
    <property type="entry name" value="HSP70_1"/>
    <property type="match status" value="1"/>
</dbReference>
<dbReference type="PROSITE" id="PS00329">
    <property type="entry name" value="HSP70_2"/>
    <property type="match status" value="1"/>
</dbReference>
<gene>
    <name evidence="1" type="primary">hscA</name>
    <name type="ordered locus">AB57_1852</name>
</gene>
<comment type="function">
    <text evidence="1">Chaperone involved in the maturation of iron-sulfur cluster-containing proteins. Has a low intrinsic ATPase activity which is markedly stimulated by HscB.</text>
</comment>
<comment type="similarity">
    <text evidence="1">Belongs to the heat shock protein 70 family.</text>
</comment>
<protein>
    <recommendedName>
        <fullName evidence="1">Chaperone protein HscA homolog</fullName>
    </recommendedName>
</protein>
<accession>B7I5P9</accession>
<keyword id="KW-0067">ATP-binding</keyword>
<keyword id="KW-0143">Chaperone</keyword>
<keyword id="KW-0547">Nucleotide-binding</keyword>
<name>HSCA_ACIB5</name>
<evidence type="ECO:0000255" key="1">
    <source>
        <dbReference type="HAMAP-Rule" id="MF_00679"/>
    </source>
</evidence>